<geneLocation type="chloroplast"/>
<sequence>MSPQTETKASVGFKAGVKDYKLTYYTPDYETKDTDILAAFRVTPQPGVPPEEAGAAVAAESSTGTWTTVWTDGLTSLDRYKGRCYHTETVVGEENQYIAYVAYPLDLFEEGSVTNMFTSIVGNVFGFKALRALRLEDLRIPTSYSKTFQGPPHGIQVERDKLNKYGRPLLGCTIKPKLGLSAKNYGRAVYECLRGGLDFTKDDENVNSQPFMRWRDRFLFCAEAIYKAQAETGEIKGHYLNATAGTCEEMIKRAVFARELGVPIVMHDYLTGGFTANTSLAHYCRDNGLLLHIHRAMHAVIDRQKNHGMHFRVLAKALRMSGGDHIHAGTVVGKLEGEREMTLGFVDLLRDDFIEKDRSRGIFFTQDWVSMPGVIPVASGGIHVWHMPALTEIFGDDSVLQFGGGTLGHPWGNAPGAVANRVALEACVQARNEGRDLAREGNEIIREASKWSPELASACEVWKEIKF</sequence>
<protein>
    <recommendedName>
        <fullName evidence="1">Ribulose bisphosphate carboxylase large chain</fullName>
        <shortName evidence="1">RuBisCO large subunit</shortName>
        <ecNumber evidence="1">4.1.1.39</ecNumber>
    </recommendedName>
</protein>
<dbReference type="EC" id="4.1.1.39" evidence="1"/>
<dbReference type="EMBL" id="M81815">
    <property type="protein sequence ID" value="AAA84613.1"/>
    <property type="molecule type" value="Genomic_DNA"/>
</dbReference>
<dbReference type="SMR" id="P25836"/>
<dbReference type="GO" id="GO:0009507">
    <property type="term" value="C:chloroplast"/>
    <property type="evidence" value="ECO:0007669"/>
    <property type="project" value="UniProtKB-SubCell"/>
</dbReference>
<dbReference type="GO" id="GO:0000287">
    <property type="term" value="F:magnesium ion binding"/>
    <property type="evidence" value="ECO:0007669"/>
    <property type="project" value="InterPro"/>
</dbReference>
<dbReference type="GO" id="GO:0004497">
    <property type="term" value="F:monooxygenase activity"/>
    <property type="evidence" value="ECO:0007669"/>
    <property type="project" value="UniProtKB-KW"/>
</dbReference>
<dbReference type="GO" id="GO:0016984">
    <property type="term" value="F:ribulose-bisphosphate carboxylase activity"/>
    <property type="evidence" value="ECO:0007669"/>
    <property type="project" value="UniProtKB-EC"/>
</dbReference>
<dbReference type="GO" id="GO:0009853">
    <property type="term" value="P:photorespiration"/>
    <property type="evidence" value="ECO:0007669"/>
    <property type="project" value="UniProtKB-KW"/>
</dbReference>
<dbReference type="GO" id="GO:0019253">
    <property type="term" value="P:reductive pentose-phosphate cycle"/>
    <property type="evidence" value="ECO:0007669"/>
    <property type="project" value="UniProtKB-KW"/>
</dbReference>
<dbReference type="CDD" id="cd08212">
    <property type="entry name" value="RuBisCO_large_I"/>
    <property type="match status" value="1"/>
</dbReference>
<dbReference type="FunFam" id="3.20.20.110:FF:000001">
    <property type="entry name" value="Ribulose bisphosphate carboxylase large chain"/>
    <property type="match status" value="1"/>
</dbReference>
<dbReference type="FunFam" id="3.30.70.150:FF:000001">
    <property type="entry name" value="Ribulose bisphosphate carboxylase large chain"/>
    <property type="match status" value="1"/>
</dbReference>
<dbReference type="Gene3D" id="3.20.20.110">
    <property type="entry name" value="Ribulose bisphosphate carboxylase, large subunit, C-terminal domain"/>
    <property type="match status" value="1"/>
</dbReference>
<dbReference type="Gene3D" id="3.30.70.150">
    <property type="entry name" value="RuBisCO large subunit, N-terminal domain"/>
    <property type="match status" value="1"/>
</dbReference>
<dbReference type="HAMAP" id="MF_01338">
    <property type="entry name" value="RuBisCO_L_type1"/>
    <property type="match status" value="1"/>
</dbReference>
<dbReference type="InterPro" id="IPR033966">
    <property type="entry name" value="RuBisCO"/>
</dbReference>
<dbReference type="InterPro" id="IPR020878">
    <property type="entry name" value="RuBisCo_large_chain_AS"/>
</dbReference>
<dbReference type="InterPro" id="IPR000685">
    <property type="entry name" value="RuBisCO_lsu_C"/>
</dbReference>
<dbReference type="InterPro" id="IPR036376">
    <property type="entry name" value="RuBisCO_lsu_C_sf"/>
</dbReference>
<dbReference type="InterPro" id="IPR017443">
    <property type="entry name" value="RuBisCO_lsu_fd_N"/>
</dbReference>
<dbReference type="InterPro" id="IPR036422">
    <property type="entry name" value="RuBisCO_lsu_N_sf"/>
</dbReference>
<dbReference type="InterPro" id="IPR020888">
    <property type="entry name" value="RuBisCO_lsuI"/>
</dbReference>
<dbReference type="NCBIfam" id="NF003252">
    <property type="entry name" value="PRK04208.1"/>
    <property type="match status" value="1"/>
</dbReference>
<dbReference type="PANTHER" id="PTHR42704">
    <property type="entry name" value="RIBULOSE BISPHOSPHATE CARBOXYLASE"/>
    <property type="match status" value="1"/>
</dbReference>
<dbReference type="PANTHER" id="PTHR42704:SF15">
    <property type="entry name" value="RIBULOSE BISPHOSPHATE CARBOXYLASE LARGE CHAIN"/>
    <property type="match status" value="1"/>
</dbReference>
<dbReference type="Pfam" id="PF00016">
    <property type="entry name" value="RuBisCO_large"/>
    <property type="match status" value="1"/>
</dbReference>
<dbReference type="Pfam" id="PF02788">
    <property type="entry name" value="RuBisCO_large_N"/>
    <property type="match status" value="1"/>
</dbReference>
<dbReference type="SFLD" id="SFLDG01052">
    <property type="entry name" value="RuBisCO"/>
    <property type="match status" value="1"/>
</dbReference>
<dbReference type="SFLD" id="SFLDS00014">
    <property type="entry name" value="RuBisCO"/>
    <property type="match status" value="1"/>
</dbReference>
<dbReference type="SFLD" id="SFLDG00301">
    <property type="entry name" value="RuBisCO-like_proteins"/>
    <property type="match status" value="1"/>
</dbReference>
<dbReference type="SUPFAM" id="SSF51649">
    <property type="entry name" value="RuBisCo, C-terminal domain"/>
    <property type="match status" value="1"/>
</dbReference>
<dbReference type="SUPFAM" id="SSF54966">
    <property type="entry name" value="RuBisCO, large subunit, small (N-terminal) domain"/>
    <property type="match status" value="1"/>
</dbReference>
<dbReference type="PROSITE" id="PS00157">
    <property type="entry name" value="RUBISCO_LARGE"/>
    <property type="match status" value="1"/>
</dbReference>
<organism>
    <name type="scientific">Serenoa repens</name>
    <name type="common">Saw palmetto</name>
    <name type="synonym">Brahea serrulata</name>
    <dbReference type="NCBI Taxonomy" id="4722"/>
    <lineage>
        <taxon>Eukaryota</taxon>
        <taxon>Viridiplantae</taxon>
        <taxon>Streptophyta</taxon>
        <taxon>Embryophyta</taxon>
        <taxon>Tracheophyta</taxon>
        <taxon>Spermatophyta</taxon>
        <taxon>Magnoliopsida</taxon>
        <taxon>Liliopsida</taxon>
        <taxon>Arecaceae</taxon>
        <taxon>Coryphoideae</taxon>
        <taxon>Livistoneae</taxon>
        <taxon>Livistoneae incertae sedis</taxon>
        <taxon>Serenoa</taxon>
    </lineage>
</organism>
<feature type="propeptide" id="PRO_0000031399" evidence="1">
    <location>
        <begin position="1"/>
        <end position="2"/>
    </location>
</feature>
<feature type="chain" id="PRO_0000031400" description="Ribulose bisphosphate carboxylase large chain">
    <location>
        <begin position="3"/>
        <end position="467" status="greater than"/>
    </location>
</feature>
<feature type="active site" description="Proton acceptor" evidence="1">
    <location>
        <position position="175"/>
    </location>
</feature>
<feature type="active site" description="Proton acceptor" evidence="1">
    <location>
        <position position="294"/>
    </location>
</feature>
<feature type="binding site" description="in homodimeric partner" evidence="1">
    <location>
        <position position="123"/>
    </location>
    <ligand>
        <name>substrate</name>
    </ligand>
</feature>
<feature type="binding site" evidence="1">
    <location>
        <position position="173"/>
    </location>
    <ligand>
        <name>substrate</name>
    </ligand>
</feature>
<feature type="binding site" evidence="1">
    <location>
        <position position="177"/>
    </location>
    <ligand>
        <name>substrate</name>
    </ligand>
</feature>
<feature type="binding site" description="via carbamate group" evidence="1">
    <location>
        <position position="201"/>
    </location>
    <ligand>
        <name>Mg(2+)</name>
        <dbReference type="ChEBI" id="CHEBI:18420"/>
    </ligand>
</feature>
<feature type="binding site" evidence="1">
    <location>
        <position position="203"/>
    </location>
    <ligand>
        <name>Mg(2+)</name>
        <dbReference type="ChEBI" id="CHEBI:18420"/>
    </ligand>
</feature>
<feature type="binding site" evidence="1">
    <location>
        <position position="204"/>
    </location>
    <ligand>
        <name>Mg(2+)</name>
        <dbReference type="ChEBI" id="CHEBI:18420"/>
    </ligand>
</feature>
<feature type="binding site" evidence="1">
    <location>
        <position position="295"/>
    </location>
    <ligand>
        <name>substrate</name>
    </ligand>
</feature>
<feature type="binding site" evidence="1">
    <location>
        <position position="327"/>
    </location>
    <ligand>
        <name>substrate</name>
    </ligand>
</feature>
<feature type="binding site" evidence="1">
    <location>
        <position position="379"/>
    </location>
    <ligand>
        <name>substrate</name>
    </ligand>
</feature>
<feature type="site" description="Transition state stabilizer" evidence="1">
    <location>
        <position position="334"/>
    </location>
</feature>
<feature type="modified residue" description="N-acetylproline" evidence="1">
    <location>
        <position position="3"/>
    </location>
</feature>
<feature type="modified residue" description="N6,N6,N6-trimethyllysine" evidence="1">
    <location>
        <position position="14"/>
    </location>
</feature>
<feature type="modified residue" description="N6-carboxylysine" evidence="1">
    <location>
        <position position="201"/>
    </location>
</feature>
<feature type="disulfide bond" description="Interchain; in linked form" evidence="1">
    <location>
        <position position="247"/>
    </location>
</feature>
<feature type="non-terminal residue">
    <location>
        <position position="467"/>
    </location>
</feature>
<reference key="1">
    <citation type="journal article" date="1990" name="Mol. Biol. Evol.">
        <title>Chloroplast DNA evolves slowly in the palm family (Arecaceae).</title>
        <authorList>
            <person name="Wilson M.A."/>
            <person name="Gaut B.S."/>
            <person name="Clegg M.T."/>
        </authorList>
    </citation>
    <scope>NUCLEOTIDE SEQUENCE [GENOMIC DNA]</scope>
</reference>
<keyword id="KW-0007">Acetylation</keyword>
<keyword id="KW-0113">Calvin cycle</keyword>
<keyword id="KW-0120">Carbon dioxide fixation</keyword>
<keyword id="KW-0150">Chloroplast</keyword>
<keyword id="KW-1015">Disulfide bond</keyword>
<keyword id="KW-0456">Lyase</keyword>
<keyword id="KW-0460">Magnesium</keyword>
<keyword id="KW-0479">Metal-binding</keyword>
<keyword id="KW-0488">Methylation</keyword>
<keyword id="KW-0503">Monooxygenase</keyword>
<keyword id="KW-0560">Oxidoreductase</keyword>
<keyword id="KW-0601">Photorespiration</keyword>
<keyword id="KW-0602">Photosynthesis</keyword>
<keyword id="KW-0934">Plastid</keyword>
<name>RBL_SERRE</name>
<gene>
    <name evidence="1" type="primary">rbcL</name>
</gene>
<evidence type="ECO:0000255" key="1">
    <source>
        <dbReference type="HAMAP-Rule" id="MF_01338"/>
    </source>
</evidence>
<comment type="function">
    <text evidence="1">RuBisCO catalyzes two reactions: the carboxylation of D-ribulose 1,5-bisphosphate, the primary event in carbon dioxide fixation, as well as the oxidative fragmentation of the pentose substrate in the photorespiration process. Both reactions occur simultaneously and in competition at the same active site.</text>
</comment>
<comment type="catalytic activity">
    <reaction evidence="1">
        <text>2 (2R)-3-phosphoglycerate + 2 H(+) = D-ribulose 1,5-bisphosphate + CO2 + H2O</text>
        <dbReference type="Rhea" id="RHEA:23124"/>
        <dbReference type="ChEBI" id="CHEBI:15377"/>
        <dbReference type="ChEBI" id="CHEBI:15378"/>
        <dbReference type="ChEBI" id="CHEBI:16526"/>
        <dbReference type="ChEBI" id="CHEBI:57870"/>
        <dbReference type="ChEBI" id="CHEBI:58272"/>
        <dbReference type="EC" id="4.1.1.39"/>
    </reaction>
</comment>
<comment type="catalytic activity">
    <reaction evidence="1">
        <text>D-ribulose 1,5-bisphosphate + O2 = 2-phosphoglycolate + (2R)-3-phosphoglycerate + 2 H(+)</text>
        <dbReference type="Rhea" id="RHEA:36631"/>
        <dbReference type="ChEBI" id="CHEBI:15378"/>
        <dbReference type="ChEBI" id="CHEBI:15379"/>
        <dbReference type="ChEBI" id="CHEBI:57870"/>
        <dbReference type="ChEBI" id="CHEBI:58033"/>
        <dbReference type="ChEBI" id="CHEBI:58272"/>
    </reaction>
</comment>
<comment type="cofactor">
    <cofactor evidence="1">
        <name>Mg(2+)</name>
        <dbReference type="ChEBI" id="CHEBI:18420"/>
    </cofactor>
    <text evidence="1">Binds 1 Mg(2+) ion per subunit.</text>
</comment>
<comment type="subunit">
    <text evidence="1">Heterohexadecamer of 8 large chains and 8 small chains; disulfide-linked. The disulfide link is formed within the large subunit homodimers.</text>
</comment>
<comment type="subcellular location">
    <subcellularLocation>
        <location>Plastid</location>
        <location>Chloroplast</location>
    </subcellularLocation>
</comment>
<comment type="PTM">
    <text evidence="1">The disulfide bond which can form in the large chain dimeric partners within the hexadecamer appears to be associated with oxidative stress and protein turnover.</text>
</comment>
<comment type="miscellaneous">
    <text evidence="1">The basic functional RuBisCO is composed of a large chain homodimer in a 'head-to-tail' conformation. In form I RuBisCO this homodimer is arranged in a barrel-like tetramer with the small subunits forming a tetrameric 'cap' on each end of the 'barrel'.</text>
</comment>
<comment type="similarity">
    <text evidence="1">Belongs to the RuBisCO large chain family. Type I subfamily.</text>
</comment>
<accession>P25836</accession>
<proteinExistence type="inferred from homology"/>